<keyword id="KW-0002">3D-structure</keyword>
<keyword id="KW-0963">Cytoplasm</keyword>
<keyword id="KW-0324">Glycolysis</keyword>
<keyword id="KW-0520">NAD</keyword>
<keyword id="KW-0560">Oxidoreductase</keyword>
<keyword id="KW-0597">Phosphoprotein</keyword>
<keyword id="KW-1185">Reference proteome</keyword>
<organism>
    <name type="scientific">Mus musculus</name>
    <name type="common">Mouse</name>
    <dbReference type="NCBI Taxonomy" id="10090"/>
    <lineage>
        <taxon>Eukaryota</taxon>
        <taxon>Metazoa</taxon>
        <taxon>Chordata</taxon>
        <taxon>Craniata</taxon>
        <taxon>Vertebrata</taxon>
        <taxon>Euteleostomi</taxon>
        <taxon>Mammalia</taxon>
        <taxon>Eutheria</taxon>
        <taxon>Euarchontoglires</taxon>
        <taxon>Glires</taxon>
        <taxon>Rodentia</taxon>
        <taxon>Myomorpha</taxon>
        <taxon>Muroidea</taxon>
        <taxon>Muridae</taxon>
        <taxon>Murinae</taxon>
        <taxon>Mus</taxon>
        <taxon>Mus</taxon>
    </lineage>
</organism>
<evidence type="ECO:0000250" key="1"/>
<evidence type="ECO:0000250" key="2">
    <source>
        <dbReference type="UniProtKB" id="Q9ESV6"/>
    </source>
</evidence>
<evidence type="ECO:0000255" key="3">
    <source>
        <dbReference type="PROSITE-ProRule" id="PRU10009"/>
    </source>
</evidence>
<evidence type="ECO:0000256" key="4">
    <source>
        <dbReference type="SAM" id="MobiDB-lite"/>
    </source>
</evidence>
<evidence type="ECO:0000269" key="5">
    <source>
    </source>
</evidence>
<evidence type="ECO:0000305" key="6"/>
<evidence type="ECO:0007829" key="7">
    <source>
        <dbReference type="PDB" id="5C7I"/>
    </source>
</evidence>
<reference key="1">
    <citation type="journal article" date="1992" name="Biol. Reprod.">
        <title>Expression of a glyceraldehyde 3-phosphate dehydrogenase gene specific to mouse spermatogenic cells.</title>
        <authorList>
            <person name="Welch J.E."/>
            <person name="Schatte E.C."/>
            <person name="O'Brien D.A."/>
            <person name="Eddy E.M."/>
        </authorList>
    </citation>
    <scope>NUCLEOTIDE SEQUENCE [MRNA]</scope>
    <source>
        <strain>CD-1</strain>
        <tissue>Testis</tissue>
    </source>
</reference>
<reference key="2">
    <citation type="journal article" date="1995" name="Dev. Genet.">
        <title>Genomic organization of a mouse glyceraldehyde 3-phosphate dehydrogenase gene (Gapd-s) expressed in post-meiotic spermatogenic cells.</title>
        <authorList>
            <person name="Welch J.E."/>
            <person name="Brown P.R."/>
            <person name="O'Brien D.A."/>
            <person name="Eddy E.M."/>
        </authorList>
    </citation>
    <scope>NUCLEOTIDE SEQUENCE [GENOMIC DNA]</scope>
    <source>
        <strain>ICR X Swiss Webster</strain>
        <tissue>Testis</tissue>
    </source>
</reference>
<reference key="3">
    <citation type="journal article" date="2004" name="Proc. Natl. Acad. Sci. U.S.A.">
        <title>Glyceraldehyde 3-phosphate dehydrogenase-S, a sperm-specific glycolytic enzyme, is required for sperm motility and male fertility.</title>
        <authorList>
            <person name="Miki K."/>
            <person name="Qu W."/>
            <person name="Goulding E.H."/>
            <person name="Willis W.D."/>
            <person name="Bunch D.O."/>
            <person name="Strader L.F."/>
            <person name="Perreault S.D."/>
            <person name="Eddy E.M."/>
            <person name="O'Brien D.A."/>
        </authorList>
    </citation>
    <scope>FUNCTION</scope>
    <scope>DISRUPTION PHENOTYPE</scope>
</reference>
<reference key="4">
    <citation type="journal article" date="2010" name="Cell">
        <title>A tissue-specific atlas of mouse protein phosphorylation and expression.</title>
        <authorList>
            <person name="Huttlin E.L."/>
            <person name="Jedrychowski M.P."/>
            <person name="Elias J.E."/>
            <person name="Goswami T."/>
            <person name="Rad R."/>
            <person name="Beausoleil S.A."/>
            <person name="Villen J."/>
            <person name="Haas W."/>
            <person name="Sowa M.E."/>
            <person name="Gygi S.P."/>
        </authorList>
    </citation>
    <scope>IDENTIFICATION BY MASS SPECTROMETRY [LARGE SCALE ANALYSIS]</scope>
    <source>
        <tissue>Testis</tissue>
    </source>
</reference>
<sequence length="440" mass="47657">MSRRDVVLTNVTVVQLRRDRCPCPCPCPCPCPCPVIRPPPPKLEDPPPTVEEQPPPPPPPPPPPPPPPPPPPPQIEPDKFEEAPPPPPPPPPPPPPPPPPLQKPARELTVGINGFGRIGRLVLRVCMEKGIRVVAVNDPFIDPEYMVYMFKYDSTHGRYKGNVEHKNGQLVVDNLEINTYQCKDPKEIPWSSIGNPYVVECTGVYLSIEAASAHISSGARRVVVTAPSPDAPMFVMGVNEKDYNPGSMTIVSNASCTTNCLAPLAKVIHENFGIVEGLMTTVHSYTATQKTVDGPSKKDWRGGRGAHQNIIPSSTGAAKAVGKVIPELKGKLTGMAFRVPTPNVSVVDLTCRLAKPASYSAITEAVKAAAKGPLAGILAYTEDQVVSTDFNGNPHSSIFDAKAGIALNDNFVKLVAWYDNEYGYSNRVVDLLRYMFSREK</sequence>
<feature type="chain" id="PRO_0000145504" description="Glyceraldehyde-3-phosphate dehydrogenase, testis-specific">
    <location>
        <begin position="1"/>
        <end position="440"/>
    </location>
</feature>
<feature type="region of interest" description="Testis-specific N-terminal extension" evidence="1">
    <location>
        <begin position="1"/>
        <end position="105"/>
    </location>
</feature>
<feature type="region of interest" description="Disordered" evidence="4">
    <location>
        <begin position="40"/>
        <end position="106"/>
    </location>
</feature>
<feature type="compositionally biased region" description="Pro residues" evidence="4">
    <location>
        <begin position="40"/>
        <end position="75"/>
    </location>
</feature>
<feature type="compositionally biased region" description="Pro residues" evidence="4">
    <location>
        <begin position="83"/>
        <end position="102"/>
    </location>
</feature>
<feature type="active site" description="Nucleophile" evidence="3">
    <location>
        <position position="256"/>
    </location>
</feature>
<feature type="binding site" evidence="1">
    <location>
        <begin position="117"/>
        <end position="118"/>
    </location>
    <ligand>
        <name>NAD(+)</name>
        <dbReference type="ChEBI" id="CHEBI:57540"/>
    </ligand>
</feature>
<feature type="binding site" evidence="1">
    <location>
        <position position="138"/>
    </location>
    <ligand>
        <name>NAD(+)</name>
        <dbReference type="ChEBI" id="CHEBI:57540"/>
    </ligand>
</feature>
<feature type="binding site" evidence="1">
    <location>
        <position position="183"/>
    </location>
    <ligand>
        <name>NAD(+)</name>
        <dbReference type="ChEBI" id="CHEBI:57540"/>
    </ligand>
</feature>
<feature type="binding site" evidence="1">
    <location>
        <position position="205"/>
    </location>
    <ligand>
        <name>NAD(+)</name>
        <dbReference type="ChEBI" id="CHEBI:57540"/>
    </ligand>
</feature>
<feature type="binding site" evidence="1">
    <location>
        <position position="225"/>
    </location>
    <ligand>
        <name>NAD(+)</name>
        <dbReference type="ChEBI" id="CHEBI:57540"/>
    </ligand>
</feature>
<feature type="binding site" evidence="1">
    <location>
        <begin position="255"/>
        <end position="257"/>
    </location>
    <ligand>
        <name>D-glyceraldehyde 3-phosphate</name>
        <dbReference type="ChEBI" id="CHEBI:59776"/>
    </ligand>
</feature>
<feature type="binding site" evidence="1">
    <location>
        <position position="286"/>
    </location>
    <ligand>
        <name>D-glyceraldehyde 3-phosphate</name>
        <dbReference type="ChEBI" id="CHEBI:59776"/>
    </ligand>
</feature>
<feature type="binding site" evidence="1">
    <location>
        <begin position="315"/>
        <end position="316"/>
    </location>
    <ligand>
        <name>D-glyceraldehyde 3-phosphate</name>
        <dbReference type="ChEBI" id="CHEBI:59776"/>
    </ligand>
</feature>
<feature type="binding site" evidence="1">
    <location>
        <position position="338"/>
    </location>
    <ligand>
        <name>D-glyceraldehyde 3-phosphate</name>
        <dbReference type="ChEBI" id="CHEBI:59776"/>
    </ligand>
</feature>
<feature type="binding site" evidence="1">
    <location>
        <position position="420"/>
    </location>
    <ligand>
        <name>NAD(+)</name>
        <dbReference type="ChEBI" id="CHEBI:57540"/>
    </ligand>
</feature>
<feature type="site" description="Activates thiol group during catalysis" evidence="1">
    <location>
        <position position="283"/>
    </location>
</feature>
<feature type="modified residue" description="Phosphoserine" evidence="2">
    <location>
        <position position="358"/>
    </location>
</feature>
<feature type="sequence conflict" description="In Ref. 2; AAA80276." evidence="6" ref="2">
    <location>
        <begin position="33"/>
        <end position="34"/>
    </location>
</feature>
<feature type="sequence conflict" description="In Ref. 2; AAA80276." evidence="6" ref="2">
    <original>L</original>
    <variation>V</variation>
    <location>
        <position position="43"/>
    </location>
</feature>
<feature type="strand" evidence="7">
    <location>
        <begin position="109"/>
        <end position="113"/>
    </location>
</feature>
<feature type="helix" evidence="7">
    <location>
        <begin position="117"/>
        <end position="129"/>
    </location>
</feature>
<feature type="strand" evidence="7">
    <location>
        <begin position="132"/>
        <end position="137"/>
    </location>
</feature>
<feature type="helix" evidence="7">
    <location>
        <begin position="143"/>
        <end position="151"/>
    </location>
</feature>
<feature type="turn" evidence="7">
    <location>
        <begin position="154"/>
        <end position="156"/>
    </location>
</feature>
<feature type="strand" evidence="7">
    <location>
        <begin position="163"/>
        <end position="166"/>
    </location>
</feature>
<feature type="strand" evidence="7">
    <location>
        <begin position="169"/>
        <end position="172"/>
    </location>
</feature>
<feature type="strand" evidence="7">
    <location>
        <begin position="175"/>
        <end position="180"/>
    </location>
</feature>
<feature type="helix" evidence="7">
    <location>
        <begin position="185"/>
        <end position="187"/>
    </location>
</feature>
<feature type="helix" evidence="7">
    <location>
        <begin position="190"/>
        <end position="193"/>
    </location>
</feature>
<feature type="strand" evidence="7">
    <location>
        <begin position="197"/>
        <end position="200"/>
    </location>
</feature>
<feature type="strand" evidence="7">
    <location>
        <begin position="202"/>
        <end position="204"/>
    </location>
</feature>
<feature type="helix" evidence="7">
    <location>
        <begin position="208"/>
        <end position="216"/>
    </location>
</feature>
<feature type="strand" evidence="7">
    <location>
        <begin position="220"/>
        <end position="226"/>
    </location>
</feature>
<feature type="strand" evidence="7">
    <location>
        <begin position="229"/>
        <end position="231"/>
    </location>
</feature>
<feature type="turn" evidence="7">
    <location>
        <begin position="236"/>
        <end position="238"/>
    </location>
</feature>
<feature type="helix" evidence="7">
    <location>
        <begin position="240"/>
        <end position="242"/>
    </location>
</feature>
<feature type="turn" evidence="7">
    <location>
        <begin position="245"/>
        <end position="247"/>
    </location>
</feature>
<feature type="strand" evidence="7">
    <location>
        <begin position="249"/>
        <end position="252"/>
    </location>
</feature>
<feature type="helix" evidence="7">
    <location>
        <begin position="256"/>
        <end position="271"/>
    </location>
</feature>
<feature type="strand" evidence="7">
    <location>
        <begin position="274"/>
        <end position="284"/>
    </location>
</feature>
<feature type="strand" evidence="7">
    <location>
        <begin position="289"/>
        <end position="293"/>
    </location>
</feature>
<feature type="helix" evidence="7">
    <location>
        <begin position="301"/>
        <end position="303"/>
    </location>
</feature>
<feature type="turn" evidence="7">
    <location>
        <begin position="306"/>
        <end position="308"/>
    </location>
</feature>
<feature type="strand" evidence="7">
    <location>
        <begin position="311"/>
        <end position="314"/>
    </location>
</feature>
<feature type="turn" evidence="7">
    <location>
        <begin position="317"/>
        <end position="320"/>
    </location>
</feature>
<feature type="helix" evidence="7">
    <location>
        <begin position="321"/>
        <end position="324"/>
    </location>
</feature>
<feature type="helix" evidence="7">
    <location>
        <begin position="326"/>
        <end position="328"/>
    </location>
</feature>
<feature type="turn" evidence="7">
    <location>
        <begin position="329"/>
        <end position="331"/>
    </location>
</feature>
<feature type="strand" evidence="7">
    <location>
        <begin position="332"/>
        <end position="340"/>
    </location>
</feature>
<feature type="strand" evidence="7">
    <location>
        <begin position="345"/>
        <end position="355"/>
    </location>
</feature>
<feature type="helix" evidence="7">
    <location>
        <begin position="359"/>
        <end position="371"/>
    </location>
</feature>
<feature type="turn" evidence="7">
    <location>
        <begin position="372"/>
        <end position="377"/>
    </location>
</feature>
<feature type="strand" evidence="7">
    <location>
        <begin position="378"/>
        <end position="381"/>
    </location>
</feature>
<feature type="helix" evidence="7">
    <location>
        <begin position="387"/>
        <end position="390"/>
    </location>
</feature>
<feature type="strand" evidence="7">
    <location>
        <begin position="396"/>
        <end position="400"/>
    </location>
</feature>
<feature type="turn" evidence="7">
    <location>
        <begin position="401"/>
        <end position="403"/>
    </location>
</feature>
<feature type="strand" evidence="7">
    <location>
        <begin position="405"/>
        <end position="408"/>
    </location>
</feature>
<feature type="strand" evidence="7">
    <location>
        <begin position="411"/>
        <end position="418"/>
    </location>
</feature>
<feature type="helix" evidence="7">
    <location>
        <begin position="422"/>
        <end position="437"/>
    </location>
</feature>
<protein>
    <recommendedName>
        <fullName>Glyceraldehyde-3-phosphate dehydrogenase, testis-specific</fullName>
        <ecNumber>1.2.1.12</ecNumber>
    </recommendedName>
    <alternativeName>
        <fullName>Spermatogenic cell-specific glyceraldehyde 3-phosphate dehydrogenase 2</fullName>
        <shortName>GAPDH-2</shortName>
    </alternativeName>
    <alternativeName>
        <fullName>Spermatogenic glyceraldehyde-3-phosphate dehydrogenase</fullName>
    </alternativeName>
</protein>
<dbReference type="EC" id="1.2.1.12"/>
<dbReference type="EMBL" id="M60978">
    <property type="protein sequence ID" value="AAA53033.1"/>
    <property type="molecule type" value="mRNA"/>
</dbReference>
<dbReference type="EMBL" id="U09964">
    <property type="protein sequence ID" value="AAA80276.1"/>
    <property type="molecule type" value="Genomic_DNA"/>
</dbReference>
<dbReference type="CCDS" id="CCDS71933.1"/>
<dbReference type="PIR" id="I49681">
    <property type="entry name" value="I49681"/>
</dbReference>
<dbReference type="RefSeq" id="NP_032111.1">
    <property type="nucleotide sequence ID" value="NM_008085.2"/>
</dbReference>
<dbReference type="PDB" id="5C7I">
    <property type="method" value="X-ray"/>
    <property type="resolution" value="2.01 A"/>
    <property type="chains" value="O/R=107-439"/>
</dbReference>
<dbReference type="PDBsum" id="5C7I"/>
<dbReference type="SMR" id="Q64467"/>
<dbReference type="BioGRID" id="199830">
    <property type="interactions" value="7"/>
</dbReference>
<dbReference type="FunCoup" id="Q64467">
    <property type="interactions" value="142"/>
</dbReference>
<dbReference type="IntAct" id="Q64467">
    <property type="interactions" value="1"/>
</dbReference>
<dbReference type="STRING" id="10090.ENSMUSP00000138634"/>
<dbReference type="GlyGen" id="Q64467">
    <property type="glycosylation" value="3 sites, 1 N-linked glycan (1 site), 1 O-linked glycan (1 site)"/>
</dbReference>
<dbReference type="iPTMnet" id="Q64467"/>
<dbReference type="PhosphoSitePlus" id="Q64467"/>
<dbReference type="SwissPalm" id="Q64467"/>
<dbReference type="jPOST" id="Q64467"/>
<dbReference type="PaxDb" id="10090-ENSMUSP00000074317"/>
<dbReference type="PeptideAtlas" id="Q64467"/>
<dbReference type="ProteomicsDB" id="271624"/>
<dbReference type="DNASU" id="14447"/>
<dbReference type="GeneID" id="14447"/>
<dbReference type="KEGG" id="mmu:14447"/>
<dbReference type="AGR" id="MGI:95653"/>
<dbReference type="CTD" id="26330"/>
<dbReference type="MGI" id="MGI:95653">
    <property type="gene designation" value="Gapdhs"/>
</dbReference>
<dbReference type="eggNOG" id="KOG0657">
    <property type="taxonomic scope" value="Eukaryota"/>
</dbReference>
<dbReference type="InParanoid" id="Q64467"/>
<dbReference type="OrthoDB" id="1152826at2759"/>
<dbReference type="PhylomeDB" id="Q64467"/>
<dbReference type="TreeFam" id="TF300533"/>
<dbReference type="BRENDA" id="1.2.1.12">
    <property type="organism ID" value="3474"/>
</dbReference>
<dbReference type="Reactome" id="R-MMU-70171">
    <property type="pathway name" value="Glycolysis"/>
</dbReference>
<dbReference type="Reactome" id="R-MMU-70263">
    <property type="pathway name" value="Gluconeogenesis"/>
</dbReference>
<dbReference type="UniPathway" id="UPA00109">
    <property type="reaction ID" value="UER00184"/>
</dbReference>
<dbReference type="BioGRID-ORCS" id="14447">
    <property type="hits" value="3 hits in 78 CRISPR screens"/>
</dbReference>
<dbReference type="ChiTaRS" id="Gapdhs">
    <property type="organism name" value="mouse"/>
</dbReference>
<dbReference type="EvolutionaryTrace" id="Q64467"/>
<dbReference type="PRO" id="PR:Q64467"/>
<dbReference type="Proteomes" id="UP000000589">
    <property type="component" value="Unplaced"/>
</dbReference>
<dbReference type="RNAct" id="Q64467">
    <property type="molecule type" value="protein"/>
</dbReference>
<dbReference type="GO" id="GO:0005929">
    <property type="term" value="C:cilium"/>
    <property type="evidence" value="ECO:0000314"/>
    <property type="project" value="MGI"/>
</dbReference>
<dbReference type="GO" id="GO:0005737">
    <property type="term" value="C:cytoplasm"/>
    <property type="evidence" value="ECO:0007669"/>
    <property type="project" value="UniProtKB-SubCell"/>
</dbReference>
<dbReference type="GO" id="GO:0031514">
    <property type="term" value="C:motile cilium"/>
    <property type="evidence" value="ECO:0000314"/>
    <property type="project" value="MGI"/>
</dbReference>
<dbReference type="GO" id="GO:0035686">
    <property type="term" value="C:sperm fibrous sheath"/>
    <property type="evidence" value="ECO:0000314"/>
    <property type="project" value="MGI"/>
</dbReference>
<dbReference type="GO" id="GO:0097228">
    <property type="term" value="C:sperm principal piece"/>
    <property type="evidence" value="ECO:0000314"/>
    <property type="project" value="MGI"/>
</dbReference>
<dbReference type="GO" id="GO:0004365">
    <property type="term" value="F:glyceraldehyde-3-phosphate dehydrogenase (NAD+) (phosphorylating) activity"/>
    <property type="evidence" value="ECO:0000314"/>
    <property type="project" value="MGI"/>
</dbReference>
<dbReference type="GO" id="GO:0051287">
    <property type="term" value="F:NAD binding"/>
    <property type="evidence" value="ECO:0007669"/>
    <property type="project" value="InterPro"/>
</dbReference>
<dbReference type="GO" id="GO:0050661">
    <property type="term" value="F:NADP binding"/>
    <property type="evidence" value="ECO:0007669"/>
    <property type="project" value="InterPro"/>
</dbReference>
<dbReference type="GO" id="GO:0030317">
    <property type="term" value="P:flagellated sperm motility"/>
    <property type="evidence" value="ECO:0000314"/>
    <property type="project" value="UniProtKB"/>
</dbReference>
<dbReference type="GO" id="GO:0006006">
    <property type="term" value="P:glucose metabolic process"/>
    <property type="evidence" value="ECO:0007669"/>
    <property type="project" value="InterPro"/>
</dbReference>
<dbReference type="GO" id="GO:0006096">
    <property type="term" value="P:glycolytic process"/>
    <property type="evidence" value="ECO:0000315"/>
    <property type="project" value="MGI"/>
</dbReference>
<dbReference type="GO" id="GO:0045821">
    <property type="term" value="P:positive regulation of glycolytic process"/>
    <property type="evidence" value="ECO:0000304"/>
    <property type="project" value="UniProtKB"/>
</dbReference>
<dbReference type="CDD" id="cd18126">
    <property type="entry name" value="GAPDH_I_C"/>
    <property type="match status" value="1"/>
</dbReference>
<dbReference type="CDD" id="cd05214">
    <property type="entry name" value="GAPDH_I_N"/>
    <property type="match status" value="1"/>
</dbReference>
<dbReference type="FunFam" id="3.30.360.10:FF:000001">
    <property type="entry name" value="Glyceraldehyde-3-phosphate dehydrogenase"/>
    <property type="match status" value="1"/>
</dbReference>
<dbReference type="FunFam" id="3.40.50.720:FF:000020">
    <property type="entry name" value="Glyceraldehyde-3-phosphate dehydrogenase"/>
    <property type="match status" value="1"/>
</dbReference>
<dbReference type="Gene3D" id="3.30.360.10">
    <property type="entry name" value="Dihydrodipicolinate Reductase, domain 2"/>
    <property type="match status" value="1"/>
</dbReference>
<dbReference type="Gene3D" id="3.40.50.720">
    <property type="entry name" value="NAD(P)-binding Rossmann-like Domain"/>
    <property type="match status" value="1"/>
</dbReference>
<dbReference type="InterPro" id="IPR020831">
    <property type="entry name" value="GlycerAld/Erythrose_P_DH"/>
</dbReference>
<dbReference type="InterPro" id="IPR020830">
    <property type="entry name" value="GlycerAld_3-P_DH_AS"/>
</dbReference>
<dbReference type="InterPro" id="IPR020829">
    <property type="entry name" value="GlycerAld_3-P_DH_cat"/>
</dbReference>
<dbReference type="InterPro" id="IPR020828">
    <property type="entry name" value="GlycerAld_3-P_DH_NAD(P)-bd"/>
</dbReference>
<dbReference type="InterPro" id="IPR006424">
    <property type="entry name" value="Glyceraldehyde-3-P_DH_1"/>
</dbReference>
<dbReference type="InterPro" id="IPR036291">
    <property type="entry name" value="NAD(P)-bd_dom_sf"/>
</dbReference>
<dbReference type="NCBIfam" id="TIGR01534">
    <property type="entry name" value="GAPDH-I"/>
    <property type="match status" value="1"/>
</dbReference>
<dbReference type="PANTHER" id="PTHR10836">
    <property type="entry name" value="GLYCERALDEHYDE 3-PHOSPHATE DEHYDROGENASE"/>
    <property type="match status" value="1"/>
</dbReference>
<dbReference type="PANTHER" id="PTHR10836:SF79">
    <property type="entry name" value="GLYCERALDEHYDE-3-PHOSPHATE DEHYDROGENASE, TESTIS-SPECIFIC"/>
    <property type="match status" value="1"/>
</dbReference>
<dbReference type="Pfam" id="PF02800">
    <property type="entry name" value="Gp_dh_C"/>
    <property type="match status" value="1"/>
</dbReference>
<dbReference type="Pfam" id="PF00044">
    <property type="entry name" value="Gp_dh_N"/>
    <property type="match status" value="1"/>
</dbReference>
<dbReference type="PRINTS" id="PR00078">
    <property type="entry name" value="G3PDHDRGNASE"/>
</dbReference>
<dbReference type="SMART" id="SM00846">
    <property type="entry name" value="Gp_dh_N"/>
    <property type="match status" value="1"/>
</dbReference>
<dbReference type="SUPFAM" id="SSF55347">
    <property type="entry name" value="Glyceraldehyde-3-phosphate dehydrogenase-like, C-terminal domain"/>
    <property type="match status" value="1"/>
</dbReference>
<dbReference type="SUPFAM" id="SSF51735">
    <property type="entry name" value="NAD(P)-binding Rossmann-fold domains"/>
    <property type="match status" value="1"/>
</dbReference>
<dbReference type="PROSITE" id="PS00071">
    <property type="entry name" value="GAPDH"/>
    <property type="match status" value="1"/>
</dbReference>
<gene>
    <name type="primary">Gapdhs</name>
    <name type="synonym">Gapd-s</name>
    <name type="synonym">Gapds</name>
</gene>
<name>G3PT_MOUSE</name>
<proteinExistence type="evidence at protein level"/>
<comment type="function">
    <text evidence="5">May play an important role in regulating the switch between different pathways for energy production during spermiogenesis and in the spermatozoon. Required for sperm motility and male fertility.</text>
</comment>
<comment type="catalytic activity">
    <reaction evidence="3">
        <text>D-glyceraldehyde 3-phosphate + phosphate + NAD(+) = (2R)-3-phospho-glyceroyl phosphate + NADH + H(+)</text>
        <dbReference type="Rhea" id="RHEA:10300"/>
        <dbReference type="ChEBI" id="CHEBI:15378"/>
        <dbReference type="ChEBI" id="CHEBI:43474"/>
        <dbReference type="ChEBI" id="CHEBI:57540"/>
        <dbReference type="ChEBI" id="CHEBI:57604"/>
        <dbReference type="ChEBI" id="CHEBI:57945"/>
        <dbReference type="ChEBI" id="CHEBI:59776"/>
        <dbReference type="EC" id="1.2.1.12"/>
    </reaction>
</comment>
<comment type="pathway">
    <text>Carbohydrate degradation; glycolysis; pyruvate from D-glyceraldehyde 3-phosphate: step 1/5.</text>
</comment>
<comment type="subunit">
    <text evidence="1">Homotetramer.</text>
</comment>
<comment type="subcellular location">
    <subcellularLocation>
        <location evidence="1">Cytoplasm</location>
    </subcellularLocation>
</comment>
<comment type="tissue specificity">
    <text>Testis specific.</text>
</comment>
<comment type="developmental stage">
    <text>First expressed at day 20 in post-meiotic germ cells. Levels increase until day 24 and then remain constant during maturity.</text>
</comment>
<comment type="domain">
    <text evidence="1">The testis-specific N-terminal extension mediates tight association with the cytoskeletal fibrous sheath of the spermatozoa flagellum, possibly via interchain disulfide-bonding of Cys-33 with sheath components.</text>
</comment>
<comment type="disruption phenotype">
    <text evidence="5">Mice display greatly reduced ATP levels in sperm, severely impaired sperm motility and are infertile.</text>
</comment>
<comment type="similarity">
    <text evidence="6">Belongs to the glyceraldehyde-3-phosphate dehydrogenase family.</text>
</comment>
<accession>Q64467</accession>
<accession>Q60650</accession>